<protein>
    <recommendedName>
        <fullName evidence="1">DNA gyrase inhibitor YacG</fullName>
    </recommendedName>
</protein>
<comment type="function">
    <text evidence="1">Inhibits all the catalytic activities of DNA gyrase by preventing its interaction with DNA. Acts by binding directly to the C-terminal domain of GyrB, which probably disrupts DNA binding by the gyrase.</text>
</comment>
<comment type="cofactor">
    <cofactor evidence="1">
        <name>Zn(2+)</name>
        <dbReference type="ChEBI" id="CHEBI:29105"/>
    </cofactor>
    <text evidence="1">Binds 1 zinc ion.</text>
</comment>
<comment type="subunit">
    <text evidence="1">Interacts with GyrB.</text>
</comment>
<comment type="similarity">
    <text evidence="1">Belongs to the DNA gyrase inhibitor YacG family.</text>
</comment>
<name>YACG_CITBB</name>
<gene>
    <name evidence="1" type="primary">yacG</name>
    <name type="ordered locus">Gbem_2280</name>
</gene>
<keyword id="KW-0479">Metal-binding</keyword>
<keyword id="KW-1185">Reference proteome</keyword>
<keyword id="KW-0862">Zinc</keyword>
<sequence length="62" mass="6907">MNAITTIKCPQCRKETTLAGNPYRPFCSQRCKMIDLGTWADEGYRIPGEKAPESGDEEPGDE</sequence>
<feature type="chain" id="PRO_1000130965" description="DNA gyrase inhibitor YacG">
    <location>
        <begin position="1"/>
        <end position="62"/>
    </location>
</feature>
<feature type="region of interest" description="Disordered" evidence="2">
    <location>
        <begin position="43"/>
        <end position="62"/>
    </location>
</feature>
<feature type="compositionally biased region" description="Basic and acidic residues" evidence="2">
    <location>
        <begin position="43"/>
        <end position="53"/>
    </location>
</feature>
<feature type="binding site" evidence="1">
    <location>
        <position position="9"/>
    </location>
    <ligand>
        <name>Zn(2+)</name>
        <dbReference type="ChEBI" id="CHEBI:29105"/>
    </ligand>
</feature>
<feature type="binding site" evidence="1">
    <location>
        <position position="12"/>
    </location>
    <ligand>
        <name>Zn(2+)</name>
        <dbReference type="ChEBI" id="CHEBI:29105"/>
    </ligand>
</feature>
<feature type="binding site" evidence="1">
    <location>
        <position position="27"/>
    </location>
    <ligand>
        <name>Zn(2+)</name>
        <dbReference type="ChEBI" id="CHEBI:29105"/>
    </ligand>
</feature>
<feature type="binding site" evidence="1">
    <location>
        <position position="31"/>
    </location>
    <ligand>
        <name>Zn(2+)</name>
        <dbReference type="ChEBI" id="CHEBI:29105"/>
    </ligand>
</feature>
<dbReference type="EMBL" id="CP001124">
    <property type="protein sequence ID" value="ACH39292.1"/>
    <property type="molecule type" value="Genomic_DNA"/>
</dbReference>
<dbReference type="RefSeq" id="WP_012530714.1">
    <property type="nucleotide sequence ID" value="NC_011146.1"/>
</dbReference>
<dbReference type="SMR" id="B5EEE7"/>
<dbReference type="STRING" id="404380.Gbem_2280"/>
<dbReference type="KEGG" id="gbm:Gbem_2280"/>
<dbReference type="eggNOG" id="COG3024">
    <property type="taxonomic scope" value="Bacteria"/>
</dbReference>
<dbReference type="HOGENOM" id="CLU_178280_3_2_7"/>
<dbReference type="OrthoDB" id="9809663at2"/>
<dbReference type="Proteomes" id="UP000008825">
    <property type="component" value="Chromosome"/>
</dbReference>
<dbReference type="GO" id="GO:0008270">
    <property type="term" value="F:zinc ion binding"/>
    <property type="evidence" value="ECO:0007669"/>
    <property type="project" value="InterPro"/>
</dbReference>
<dbReference type="GO" id="GO:0006355">
    <property type="term" value="P:regulation of DNA-templated transcription"/>
    <property type="evidence" value="ECO:0007669"/>
    <property type="project" value="InterPro"/>
</dbReference>
<dbReference type="Gene3D" id="3.30.50.10">
    <property type="entry name" value="Erythroid Transcription Factor GATA-1, subunit A"/>
    <property type="match status" value="1"/>
</dbReference>
<dbReference type="HAMAP" id="MF_00649">
    <property type="entry name" value="DNA_gyrase_inhibitor_YacG"/>
    <property type="match status" value="1"/>
</dbReference>
<dbReference type="InterPro" id="IPR005584">
    <property type="entry name" value="DNA_gyrase_inhibitor_YacG"/>
</dbReference>
<dbReference type="InterPro" id="IPR013088">
    <property type="entry name" value="Znf_NHR/GATA"/>
</dbReference>
<dbReference type="PANTHER" id="PTHR36150">
    <property type="entry name" value="DNA GYRASE INHIBITOR YACG"/>
    <property type="match status" value="1"/>
</dbReference>
<dbReference type="PANTHER" id="PTHR36150:SF1">
    <property type="entry name" value="DNA GYRASE INHIBITOR YACG"/>
    <property type="match status" value="1"/>
</dbReference>
<dbReference type="Pfam" id="PF03884">
    <property type="entry name" value="YacG"/>
    <property type="match status" value="1"/>
</dbReference>
<dbReference type="SUPFAM" id="SSF57716">
    <property type="entry name" value="Glucocorticoid receptor-like (DNA-binding domain)"/>
    <property type="match status" value="1"/>
</dbReference>
<evidence type="ECO:0000255" key="1">
    <source>
        <dbReference type="HAMAP-Rule" id="MF_00649"/>
    </source>
</evidence>
<evidence type="ECO:0000256" key="2">
    <source>
        <dbReference type="SAM" id="MobiDB-lite"/>
    </source>
</evidence>
<proteinExistence type="inferred from homology"/>
<organism>
    <name type="scientific">Citrifermentans bemidjiense (strain ATCC BAA-1014 / DSM 16622 / JCM 12645 / Bem)</name>
    <name type="common">Geobacter bemidjiensis</name>
    <dbReference type="NCBI Taxonomy" id="404380"/>
    <lineage>
        <taxon>Bacteria</taxon>
        <taxon>Pseudomonadati</taxon>
        <taxon>Thermodesulfobacteriota</taxon>
        <taxon>Desulfuromonadia</taxon>
        <taxon>Geobacterales</taxon>
        <taxon>Geobacteraceae</taxon>
        <taxon>Citrifermentans</taxon>
    </lineage>
</organism>
<accession>B5EEE7</accession>
<reference key="1">
    <citation type="submission" date="2008-07" db="EMBL/GenBank/DDBJ databases">
        <title>Complete sequence of Geobacter bemidjiensis BEM.</title>
        <authorList>
            <consortium name="US DOE Joint Genome Institute"/>
            <person name="Lucas S."/>
            <person name="Copeland A."/>
            <person name="Lapidus A."/>
            <person name="Glavina del Rio T."/>
            <person name="Dalin E."/>
            <person name="Tice H."/>
            <person name="Bruce D."/>
            <person name="Goodwin L."/>
            <person name="Pitluck S."/>
            <person name="Kiss H."/>
            <person name="Brettin T."/>
            <person name="Detter J.C."/>
            <person name="Han C."/>
            <person name="Kuske C.R."/>
            <person name="Schmutz J."/>
            <person name="Larimer F."/>
            <person name="Land M."/>
            <person name="Hauser L."/>
            <person name="Kyrpides N."/>
            <person name="Lykidis A."/>
            <person name="Lovley D."/>
            <person name="Richardson P."/>
        </authorList>
    </citation>
    <scope>NUCLEOTIDE SEQUENCE [LARGE SCALE GENOMIC DNA]</scope>
    <source>
        <strain>ATCC BAA-1014 / DSM 16622 / JCM 12645 / Bem</strain>
    </source>
</reference>